<evidence type="ECO:0000250" key="1"/>
<evidence type="ECO:0000255" key="2"/>
<evidence type="ECO:0000305" key="3"/>
<sequence length="237" mass="26571">MNVFDRNINFDSLFKFSQISHSTQVHLKNVYSSLAVCMFVAAAGSYVHVVTRLFQGGMLSVLGSLGMMFWLAMTPHNSETEKKRLAILAGFAFLTGVGLCPTLDFVIAINPSIIVTAFLGTSVIFVCFTLSALYAKRRSYLFLGGTLMSGLSILFLMSMMNMFFGSVMLFKAHMYLGLLIMCGFVLXDTQLIIEKAENGDKDYVWHSVDLFLDFITIFRKLMVILALNDKDKKKEKK</sequence>
<feature type="chain" id="PRO_0000179083" description="Probable Bax inhibitor 1">
    <location>
        <begin position="1"/>
        <end position="237"/>
    </location>
</feature>
<feature type="topological domain" description="Cytoplasmic" evidence="2">
    <location>
        <begin position="1"/>
        <end position="29"/>
    </location>
</feature>
<feature type="transmembrane region" description="Helical" evidence="2">
    <location>
        <begin position="30"/>
        <end position="50"/>
    </location>
</feature>
<feature type="topological domain" description="Lumenal" evidence="2">
    <location>
        <begin position="51"/>
        <end position="52"/>
    </location>
</feature>
<feature type="transmembrane region" description="Helical" evidence="2">
    <location>
        <begin position="53"/>
        <end position="73"/>
    </location>
</feature>
<feature type="topological domain" description="Cytoplasmic" evidence="2">
    <location>
        <begin position="74"/>
        <end position="86"/>
    </location>
</feature>
<feature type="transmembrane region" description="Helical" evidence="2">
    <location>
        <begin position="87"/>
        <end position="107"/>
    </location>
</feature>
<feature type="topological domain" description="Lumenal" evidence="2">
    <location>
        <begin position="108"/>
        <end position="112"/>
    </location>
</feature>
<feature type="transmembrane region" description="Helical" evidence="2">
    <location>
        <begin position="113"/>
        <end position="133"/>
    </location>
</feature>
<feature type="topological domain" description="Cytoplasmic" evidence="2">
    <location>
        <begin position="134"/>
        <end position="139"/>
    </location>
</feature>
<feature type="transmembrane region" description="Helical" evidence="2">
    <location>
        <begin position="140"/>
        <end position="160"/>
    </location>
</feature>
<feature type="topological domain" description="Lumenal" evidence="2">
    <location>
        <begin position="161"/>
        <end position="166"/>
    </location>
</feature>
<feature type="transmembrane region" description="Helical" evidence="2">
    <location>
        <begin position="167"/>
        <end position="187"/>
    </location>
</feature>
<feature type="topological domain" description="Cytoplasmic" evidence="2">
    <location>
        <begin position="188"/>
        <end position="206"/>
    </location>
</feature>
<feature type="intramembrane region" description="Helical" evidence="2">
    <location>
        <begin position="207"/>
        <end position="227"/>
    </location>
</feature>
<feature type="topological domain" description="Cytoplasmic" evidence="2">
    <location>
        <begin position="228"/>
        <end position="237"/>
    </location>
</feature>
<gene>
    <name type="primary">tmbim6</name>
    <name type="synonym">tegt</name>
</gene>
<comment type="function">
    <text evidence="1">Suppressor of apoptosis. Modulates unfolded protein response signaling. Modulate ER calcium homeostasis by acting as a calcium-leak channel (By similarity).</text>
</comment>
<comment type="subcellular location">
    <subcellularLocation>
        <location evidence="1">Endoplasmic reticulum membrane</location>
        <topology evidence="1">Multi-pass membrane protein</topology>
    </subcellularLocation>
</comment>
<comment type="tissue specificity">
    <text>Highly abundant in testis.</text>
</comment>
<comment type="domain">
    <text evidence="1">The intra-membrane loop at the C-terminus acts as a calcium pore, mediating calcium leak from the ER into the cytosol.</text>
</comment>
<comment type="similarity">
    <text evidence="3">Belongs to the BI1 family.</text>
</comment>
<name>BI1_PAROL</name>
<accession>Q9IA79</accession>
<dbReference type="EMBL" id="AF220548">
    <property type="protein sequence ID" value="AAF61067.1"/>
    <property type="molecule type" value="mRNA"/>
</dbReference>
<dbReference type="OrthoDB" id="1277691at2759"/>
<dbReference type="GO" id="GO:0005789">
    <property type="term" value="C:endoplasmic reticulum membrane"/>
    <property type="evidence" value="ECO:0007669"/>
    <property type="project" value="UniProtKB-SubCell"/>
</dbReference>
<dbReference type="GO" id="GO:0031966">
    <property type="term" value="C:mitochondrial membrane"/>
    <property type="evidence" value="ECO:0007669"/>
    <property type="project" value="TreeGrafter"/>
</dbReference>
<dbReference type="GO" id="GO:0019899">
    <property type="term" value="F:enzyme binding"/>
    <property type="evidence" value="ECO:0007669"/>
    <property type="project" value="TreeGrafter"/>
</dbReference>
<dbReference type="GO" id="GO:0006915">
    <property type="term" value="P:apoptotic process"/>
    <property type="evidence" value="ECO:0007669"/>
    <property type="project" value="UniProtKB-KW"/>
</dbReference>
<dbReference type="GO" id="GO:0034620">
    <property type="term" value="P:cellular response to unfolded protein"/>
    <property type="evidence" value="ECO:0007669"/>
    <property type="project" value="TreeGrafter"/>
</dbReference>
<dbReference type="GO" id="GO:2001234">
    <property type="term" value="P:negative regulation of apoptotic signaling pathway"/>
    <property type="evidence" value="ECO:0007669"/>
    <property type="project" value="TreeGrafter"/>
</dbReference>
<dbReference type="GO" id="GO:0033119">
    <property type="term" value="P:negative regulation of RNA splicing"/>
    <property type="evidence" value="ECO:0007669"/>
    <property type="project" value="TreeGrafter"/>
</dbReference>
<dbReference type="CDD" id="cd10430">
    <property type="entry name" value="BI-1"/>
    <property type="match status" value="1"/>
</dbReference>
<dbReference type="InterPro" id="IPR006213">
    <property type="entry name" value="Bax_inhbtr1_CS"/>
</dbReference>
<dbReference type="InterPro" id="IPR006214">
    <property type="entry name" value="Bax_inhibitor_1-related"/>
</dbReference>
<dbReference type="PANTHER" id="PTHR23291:SF32">
    <property type="entry name" value="BAX INHIBITOR 1"/>
    <property type="match status" value="1"/>
</dbReference>
<dbReference type="PANTHER" id="PTHR23291">
    <property type="entry name" value="BAX INHIBITOR-RELATED"/>
    <property type="match status" value="1"/>
</dbReference>
<dbReference type="Pfam" id="PF01027">
    <property type="entry name" value="Bax1-I"/>
    <property type="match status" value="1"/>
</dbReference>
<dbReference type="PROSITE" id="PS01243">
    <property type="entry name" value="BI1"/>
    <property type="match status" value="1"/>
</dbReference>
<organism>
    <name type="scientific">Paralichthys olivaceus</name>
    <name type="common">Bastard halibut</name>
    <name type="synonym">Hippoglossus olivaceus</name>
    <dbReference type="NCBI Taxonomy" id="8255"/>
    <lineage>
        <taxon>Eukaryota</taxon>
        <taxon>Metazoa</taxon>
        <taxon>Chordata</taxon>
        <taxon>Craniata</taxon>
        <taxon>Vertebrata</taxon>
        <taxon>Euteleostomi</taxon>
        <taxon>Actinopterygii</taxon>
        <taxon>Neopterygii</taxon>
        <taxon>Teleostei</taxon>
        <taxon>Neoteleostei</taxon>
        <taxon>Acanthomorphata</taxon>
        <taxon>Carangaria</taxon>
        <taxon>Pleuronectiformes</taxon>
        <taxon>Pleuronectoidei</taxon>
        <taxon>Paralichthyidae</taxon>
        <taxon>Paralichthys</taxon>
    </lineage>
</organism>
<proteinExistence type="evidence at transcript level"/>
<keyword id="KW-0053">Apoptosis</keyword>
<keyword id="KW-0106">Calcium</keyword>
<keyword id="KW-0256">Endoplasmic reticulum</keyword>
<keyword id="KW-0472">Membrane</keyword>
<keyword id="KW-0812">Transmembrane</keyword>
<keyword id="KW-1133">Transmembrane helix</keyword>
<keyword id="KW-0834">Unfolded protein response</keyword>
<protein>
    <recommendedName>
        <fullName>Probable Bax inhibitor 1</fullName>
        <shortName>BI-1</shortName>
    </recommendedName>
    <alternativeName>
        <fullName>Testis-enhanced gene transcript protein homolog</fullName>
    </alternativeName>
    <alternativeName>
        <fullName>Transmembrane BAX inhibitor motif-containing protein 6</fullName>
    </alternativeName>
</protein>
<reference key="1">
    <citation type="submission" date="2000-01" db="EMBL/GenBank/DDBJ databases">
        <title>Liver cDNA from Japanese flounder with similarity to TEGT.</title>
        <authorList>
            <person name="Lee J."/>
            <person name="Jeon J."/>
            <person name="Song Y."/>
        </authorList>
    </citation>
    <scope>NUCLEOTIDE SEQUENCE [MRNA]</scope>
    <source>
        <tissue>Liver</tissue>
    </source>
</reference>